<name>CBID_DECAR</name>
<reference key="1">
    <citation type="journal article" date="2009" name="BMC Genomics">
        <title>Metabolic analysis of the soil microbe Dechloromonas aromatica str. RCB: indications of a surprisingly complex life-style and cryptic anaerobic pathways for aromatic degradation.</title>
        <authorList>
            <person name="Salinero K.K."/>
            <person name="Keller K."/>
            <person name="Feil W.S."/>
            <person name="Feil H."/>
            <person name="Trong S."/>
            <person name="Di Bartolo G."/>
            <person name="Lapidus A."/>
        </authorList>
    </citation>
    <scope>NUCLEOTIDE SEQUENCE [LARGE SCALE GENOMIC DNA]</scope>
    <source>
        <strain>RCB</strain>
    </source>
</reference>
<keyword id="KW-0169">Cobalamin biosynthesis</keyword>
<keyword id="KW-0489">Methyltransferase</keyword>
<keyword id="KW-0949">S-adenosyl-L-methionine</keyword>
<keyword id="KW-0808">Transferase</keyword>
<dbReference type="EC" id="2.1.1.195" evidence="1"/>
<dbReference type="EMBL" id="CP000089">
    <property type="protein sequence ID" value="AAZ46437.1"/>
    <property type="molecule type" value="Genomic_DNA"/>
</dbReference>
<dbReference type="SMR" id="Q47FE4"/>
<dbReference type="STRING" id="159087.Daro_1690"/>
<dbReference type="KEGG" id="dar:Daro_1690"/>
<dbReference type="eggNOG" id="COG1903">
    <property type="taxonomic scope" value="Bacteria"/>
</dbReference>
<dbReference type="HOGENOM" id="CLU_041273_0_0_4"/>
<dbReference type="OrthoDB" id="6439987at2"/>
<dbReference type="UniPathway" id="UPA00148">
    <property type="reaction ID" value="UER00227"/>
</dbReference>
<dbReference type="GO" id="GO:0043780">
    <property type="term" value="F:cobalt-precorrin-5B C1-methyltransferase activity"/>
    <property type="evidence" value="ECO:0007669"/>
    <property type="project" value="RHEA"/>
</dbReference>
<dbReference type="GO" id="GO:0019251">
    <property type="term" value="P:anaerobic cobalamin biosynthetic process"/>
    <property type="evidence" value="ECO:0007669"/>
    <property type="project" value="UniProtKB-UniRule"/>
</dbReference>
<dbReference type="GO" id="GO:0032259">
    <property type="term" value="P:methylation"/>
    <property type="evidence" value="ECO:0007669"/>
    <property type="project" value="UniProtKB-KW"/>
</dbReference>
<dbReference type="Gene3D" id="3.30.2110.10">
    <property type="entry name" value="CbiD-like"/>
    <property type="match status" value="1"/>
</dbReference>
<dbReference type="HAMAP" id="MF_00787">
    <property type="entry name" value="CbiD"/>
    <property type="match status" value="1"/>
</dbReference>
<dbReference type="InterPro" id="IPR002748">
    <property type="entry name" value="CbiD"/>
</dbReference>
<dbReference type="InterPro" id="IPR036074">
    <property type="entry name" value="CbiD_sf"/>
</dbReference>
<dbReference type="NCBIfam" id="TIGR00312">
    <property type="entry name" value="cbiD"/>
    <property type="match status" value="1"/>
</dbReference>
<dbReference type="NCBIfam" id="NF000849">
    <property type="entry name" value="PRK00075.1-1"/>
    <property type="match status" value="1"/>
</dbReference>
<dbReference type="PANTHER" id="PTHR35863">
    <property type="entry name" value="COBALT-PRECORRIN-5B C(1)-METHYLTRANSFERASE"/>
    <property type="match status" value="1"/>
</dbReference>
<dbReference type="PANTHER" id="PTHR35863:SF1">
    <property type="entry name" value="COBALT-PRECORRIN-5B C(1)-METHYLTRANSFERASE"/>
    <property type="match status" value="1"/>
</dbReference>
<dbReference type="Pfam" id="PF01888">
    <property type="entry name" value="CbiD"/>
    <property type="match status" value="1"/>
</dbReference>
<dbReference type="PIRSF" id="PIRSF026782">
    <property type="entry name" value="CbiD"/>
    <property type="match status" value="1"/>
</dbReference>
<dbReference type="SUPFAM" id="SSF111342">
    <property type="entry name" value="CbiD-like"/>
    <property type="match status" value="1"/>
</dbReference>
<gene>
    <name evidence="1" type="primary">cbiD</name>
    <name type="ordered locus">Daro_1690</name>
</gene>
<sequence>MSDETRVGEAAEQAATPEKIRKGSARRERGNRTGFTTGACSAAAARAATLGLLLSEVPDTVICRLPNGQEQAFAVTDGCVEESSGLAHAVIIKDAGDDPDATHGAHMTADVRLLPDRAGEIVLKGGFGVGVVTKDGLGLEVGGPAINPVPRRNILDNVRAVAGELLDHDGLEVTISVPGGDEMAKKTLNARLGILGGISILGTTGIVRPYSTAAFRASVVQAVDVAAKQGQTSVVFTTGGRTEKFAMRQLPDLDESCFVQMGDFVKAAFSSAIKHKLPTVYVGAMVGKLTKMCQGLAVTHAWKAEVDRDILADSAREVGAPDDLIEEIRSAETARFAAERLASLGLAVTFHRQLAIKAIRSLKDKYPGNYRLAVLVCDFEGQFICRVNEDEAL</sequence>
<comment type="function">
    <text evidence="1">Catalyzes the methylation of C-1 in cobalt-precorrin-5B to form cobalt-precorrin-6A.</text>
</comment>
<comment type="catalytic activity">
    <reaction evidence="1">
        <text>Co-precorrin-5B + S-adenosyl-L-methionine = Co-precorrin-6A + S-adenosyl-L-homocysteine</text>
        <dbReference type="Rhea" id="RHEA:26285"/>
        <dbReference type="ChEBI" id="CHEBI:57856"/>
        <dbReference type="ChEBI" id="CHEBI:59789"/>
        <dbReference type="ChEBI" id="CHEBI:60063"/>
        <dbReference type="ChEBI" id="CHEBI:60064"/>
        <dbReference type="EC" id="2.1.1.195"/>
    </reaction>
</comment>
<comment type="pathway">
    <text evidence="1">Cofactor biosynthesis; adenosylcobalamin biosynthesis; cob(II)yrinate a,c-diamide from sirohydrochlorin (anaerobic route): step 6/10.</text>
</comment>
<comment type="similarity">
    <text evidence="1">Belongs to the CbiD family.</text>
</comment>
<organism>
    <name type="scientific">Dechloromonas aromatica (strain RCB)</name>
    <dbReference type="NCBI Taxonomy" id="159087"/>
    <lineage>
        <taxon>Bacteria</taxon>
        <taxon>Pseudomonadati</taxon>
        <taxon>Pseudomonadota</taxon>
        <taxon>Betaproteobacteria</taxon>
        <taxon>Rhodocyclales</taxon>
        <taxon>Azonexaceae</taxon>
        <taxon>Dechloromonas</taxon>
    </lineage>
</organism>
<accession>Q47FE4</accession>
<feature type="chain" id="PRO_0000257759" description="Cobalt-precorrin-5B C(1)-methyltransferase">
    <location>
        <begin position="1"/>
        <end position="393"/>
    </location>
</feature>
<feature type="region of interest" description="Disordered" evidence="2">
    <location>
        <begin position="1"/>
        <end position="35"/>
    </location>
</feature>
<feature type="compositionally biased region" description="Basic and acidic residues" evidence="2">
    <location>
        <begin position="18"/>
        <end position="31"/>
    </location>
</feature>
<proteinExistence type="inferred from homology"/>
<evidence type="ECO:0000255" key="1">
    <source>
        <dbReference type="HAMAP-Rule" id="MF_00787"/>
    </source>
</evidence>
<evidence type="ECO:0000256" key="2">
    <source>
        <dbReference type="SAM" id="MobiDB-lite"/>
    </source>
</evidence>
<protein>
    <recommendedName>
        <fullName evidence="1">Cobalt-precorrin-5B C(1)-methyltransferase</fullName>
        <ecNumber evidence="1">2.1.1.195</ecNumber>
    </recommendedName>
    <alternativeName>
        <fullName evidence="1">Cobalt-precorrin-6A synthase</fullName>
    </alternativeName>
</protein>